<feature type="chain" id="PRO_1000093005" description="Peptidyl-tRNA hydrolase">
    <location>
        <begin position="1"/>
        <end position="192"/>
    </location>
</feature>
<feature type="active site" description="Proton acceptor" evidence="1">
    <location>
        <position position="22"/>
    </location>
</feature>
<feature type="binding site" evidence="1">
    <location>
        <position position="17"/>
    </location>
    <ligand>
        <name>tRNA</name>
        <dbReference type="ChEBI" id="CHEBI:17843"/>
    </ligand>
</feature>
<feature type="binding site" evidence="1">
    <location>
        <position position="68"/>
    </location>
    <ligand>
        <name>tRNA</name>
        <dbReference type="ChEBI" id="CHEBI:17843"/>
    </ligand>
</feature>
<feature type="binding site" evidence="1">
    <location>
        <position position="70"/>
    </location>
    <ligand>
        <name>tRNA</name>
        <dbReference type="ChEBI" id="CHEBI:17843"/>
    </ligand>
</feature>
<feature type="binding site" evidence="1">
    <location>
        <position position="116"/>
    </location>
    <ligand>
        <name>tRNA</name>
        <dbReference type="ChEBI" id="CHEBI:17843"/>
    </ligand>
</feature>
<feature type="site" description="Discriminates between blocked and unblocked aminoacyl-tRNA" evidence="1">
    <location>
        <position position="12"/>
    </location>
</feature>
<feature type="site" description="Stabilizes the basic form of H active site to accept a proton" evidence="1">
    <location>
        <position position="95"/>
    </location>
</feature>
<evidence type="ECO:0000255" key="1">
    <source>
        <dbReference type="HAMAP-Rule" id="MF_00083"/>
    </source>
</evidence>
<dbReference type="EC" id="3.1.1.29" evidence="1"/>
<dbReference type="EMBL" id="CP000941">
    <property type="protein sequence ID" value="ACA13058.1"/>
    <property type="molecule type" value="Genomic_DNA"/>
</dbReference>
<dbReference type="RefSeq" id="WP_004084699.1">
    <property type="nucleotide sequence ID" value="NC_010513.1"/>
</dbReference>
<dbReference type="SMR" id="B0U5Y6"/>
<dbReference type="KEGG" id="xfm:Xfasm12_2205"/>
<dbReference type="HOGENOM" id="CLU_062456_3_1_6"/>
<dbReference type="GO" id="GO:0005737">
    <property type="term" value="C:cytoplasm"/>
    <property type="evidence" value="ECO:0007669"/>
    <property type="project" value="UniProtKB-SubCell"/>
</dbReference>
<dbReference type="GO" id="GO:0004045">
    <property type="term" value="F:peptidyl-tRNA hydrolase activity"/>
    <property type="evidence" value="ECO:0007669"/>
    <property type="project" value="UniProtKB-UniRule"/>
</dbReference>
<dbReference type="GO" id="GO:0000049">
    <property type="term" value="F:tRNA binding"/>
    <property type="evidence" value="ECO:0007669"/>
    <property type="project" value="UniProtKB-UniRule"/>
</dbReference>
<dbReference type="GO" id="GO:0006515">
    <property type="term" value="P:protein quality control for misfolded or incompletely synthesized proteins"/>
    <property type="evidence" value="ECO:0007669"/>
    <property type="project" value="UniProtKB-UniRule"/>
</dbReference>
<dbReference type="GO" id="GO:0072344">
    <property type="term" value="P:rescue of stalled ribosome"/>
    <property type="evidence" value="ECO:0007669"/>
    <property type="project" value="UniProtKB-UniRule"/>
</dbReference>
<dbReference type="CDD" id="cd00462">
    <property type="entry name" value="PTH"/>
    <property type="match status" value="1"/>
</dbReference>
<dbReference type="FunFam" id="3.40.50.1470:FF:000001">
    <property type="entry name" value="Peptidyl-tRNA hydrolase"/>
    <property type="match status" value="1"/>
</dbReference>
<dbReference type="Gene3D" id="3.40.50.1470">
    <property type="entry name" value="Peptidyl-tRNA hydrolase"/>
    <property type="match status" value="1"/>
</dbReference>
<dbReference type="HAMAP" id="MF_00083">
    <property type="entry name" value="Pept_tRNA_hydro_bact"/>
    <property type="match status" value="1"/>
</dbReference>
<dbReference type="InterPro" id="IPR001328">
    <property type="entry name" value="Pept_tRNA_hydro"/>
</dbReference>
<dbReference type="InterPro" id="IPR018171">
    <property type="entry name" value="Pept_tRNA_hydro_CS"/>
</dbReference>
<dbReference type="InterPro" id="IPR036416">
    <property type="entry name" value="Pept_tRNA_hydro_sf"/>
</dbReference>
<dbReference type="NCBIfam" id="TIGR00447">
    <property type="entry name" value="pth"/>
    <property type="match status" value="1"/>
</dbReference>
<dbReference type="PANTHER" id="PTHR17224">
    <property type="entry name" value="PEPTIDYL-TRNA HYDROLASE"/>
    <property type="match status" value="1"/>
</dbReference>
<dbReference type="PANTHER" id="PTHR17224:SF1">
    <property type="entry name" value="PEPTIDYL-TRNA HYDROLASE"/>
    <property type="match status" value="1"/>
</dbReference>
<dbReference type="Pfam" id="PF01195">
    <property type="entry name" value="Pept_tRNA_hydro"/>
    <property type="match status" value="1"/>
</dbReference>
<dbReference type="SUPFAM" id="SSF53178">
    <property type="entry name" value="Peptidyl-tRNA hydrolase-like"/>
    <property type="match status" value="1"/>
</dbReference>
<dbReference type="PROSITE" id="PS01195">
    <property type="entry name" value="PEPT_TRNA_HYDROL_1"/>
    <property type="match status" value="1"/>
</dbReference>
<name>PTH_XYLFM</name>
<organism>
    <name type="scientific">Xylella fastidiosa (strain M12)</name>
    <dbReference type="NCBI Taxonomy" id="405440"/>
    <lineage>
        <taxon>Bacteria</taxon>
        <taxon>Pseudomonadati</taxon>
        <taxon>Pseudomonadota</taxon>
        <taxon>Gammaproteobacteria</taxon>
        <taxon>Lysobacterales</taxon>
        <taxon>Lysobacteraceae</taxon>
        <taxon>Xylella</taxon>
    </lineage>
</organism>
<sequence length="192" mass="21178">MLGLRLIVGLGNPGSEYIKTRHNAGFRFVDGLVQREGQCWALESKLFAYVARVFIAGQWVWLLRPVTFMNLSGKSIFAGLNFWKIKPEQMLVAHDELDFPPGAVRLKFDGGHGGQNGLRDITKLLGHGRFHRLRVGIGHPGHKERVVSWVLGCPTCDENIAIDAALERASVVLPLAVAGDFDGAMKKLHTVV</sequence>
<accession>B0U5Y6</accession>
<gene>
    <name evidence="1" type="primary">pth</name>
    <name type="ordered locus">Xfasm12_2205</name>
</gene>
<proteinExistence type="inferred from homology"/>
<keyword id="KW-0963">Cytoplasm</keyword>
<keyword id="KW-0378">Hydrolase</keyword>
<keyword id="KW-0694">RNA-binding</keyword>
<keyword id="KW-0820">tRNA-binding</keyword>
<protein>
    <recommendedName>
        <fullName evidence="1">Peptidyl-tRNA hydrolase</fullName>
        <shortName evidence="1">Pth</shortName>
        <ecNumber evidence="1">3.1.1.29</ecNumber>
    </recommendedName>
</protein>
<comment type="function">
    <text evidence="1">Hydrolyzes ribosome-free peptidyl-tRNAs (with 1 or more amino acids incorporated), which drop off the ribosome during protein synthesis, or as a result of ribosome stalling.</text>
</comment>
<comment type="function">
    <text evidence="1">Catalyzes the release of premature peptidyl moieties from peptidyl-tRNA molecules trapped in stalled 50S ribosomal subunits, and thus maintains levels of free tRNAs and 50S ribosomes.</text>
</comment>
<comment type="catalytic activity">
    <reaction evidence="1">
        <text>an N-acyl-L-alpha-aminoacyl-tRNA + H2O = an N-acyl-L-amino acid + a tRNA + H(+)</text>
        <dbReference type="Rhea" id="RHEA:54448"/>
        <dbReference type="Rhea" id="RHEA-COMP:10123"/>
        <dbReference type="Rhea" id="RHEA-COMP:13883"/>
        <dbReference type="ChEBI" id="CHEBI:15377"/>
        <dbReference type="ChEBI" id="CHEBI:15378"/>
        <dbReference type="ChEBI" id="CHEBI:59874"/>
        <dbReference type="ChEBI" id="CHEBI:78442"/>
        <dbReference type="ChEBI" id="CHEBI:138191"/>
        <dbReference type="EC" id="3.1.1.29"/>
    </reaction>
</comment>
<comment type="subunit">
    <text evidence="1">Monomer.</text>
</comment>
<comment type="subcellular location">
    <subcellularLocation>
        <location evidence="1">Cytoplasm</location>
    </subcellularLocation>
</comment>
<comment type="similarity">
    <text evidence="1">Belongs to the PTH family.</text>
</comment>
<reference key="1">
    <citation type="journal article" date="2010" name="J. Bacteriol.">
        <title>Whole genome sequences of two Xylella fastidiosa strains (M12 and M23) causing almond leaf scorch disease in California.</title>
        <authorList>
            <person name="Chen J."/>
            <person name="Xie G."/>
            <person name="Han S."/>
            <person name="Chertkov O."/>
            <person name="Sims D."/>
            <person name="Civerolo E.L."/>
        </authorList>
    </citation>
    <scope>NUCLEOTIDE SEQUENCE [LARGE SCALE GENOMIC DNA]</scope>
    <source>
        <strain>M12</strain>
    </source>
</reference>